<proteinExistence type="inferred from homology"/>
<keyword id="KW-0687">Ribonucleoprotein</keyword>
<keyword id="KW-0689">Ribosomal protein</keyword>
<keyword id="KW-0694">RNA-binding</keyword>
<keyword id="KW-0699">rRNA-binding</keyword>
<reference key="1">
    <citation type="journal article" date="2009" name="Vaccine">
        <title>Whole genome sequence analysis of Mycobacterium bovis bacillus Calmette-Guerin (BCG) Tokyo 172: a comparative study of BCG vaccine substrains.</title>
        <authorList>
            <person name="Seki M."/>
            <person name="Honda I."/>
            <person name="Fujita I."/>
            <person name="Yano I."/>
            <person name="Yamamoto S."/>
            <person name="Koyama A."/>
        </authorList>
    </citation>
    <scope>NUCLEOTIDE SEQUENCE [LARGE SCALE GENOMIC DNA]</scope>
    <source>
        <strain>BCG / Tokyo 172 / ATCC 35737 / TMC 1019</strain>
    </source>
</reference>
<name>RL20_MYCBT</name>
<sequence>MARVKRAVNAHKKRRSILKASRGYRGQRSRLYRKAKEQQLHSLNYAYRDRRARKGEFRKLWIARINAAARLNDITYNRLIQGLKAAGVEVDRKNLADIAISDPAAFTALVDVARAALPEDVNAPSGEAA</sequence>
<accession>C1ANR6</accession>
<comment type="function">
    <text evidence="1">Binds directly to 23S ribosomal RNA and is necessary for the in vitro assembly process of the 50S ribosomal subunit. It is not involved in the protein synthesizing functions of that subunit.</text>
</comment>
<comment type="similarity">
    <text evidence="1">Belongs to the bacterial ribosomal protein bL20 family.</text>
</comment>
<dbReference type="EMBL" id="AP010918">
    <property type="protein sequence ID" value="BAH25945.1"/>
    <property type="molecule type" value="Genomic_DNA"/>
</dbReference>
<dbReference type="RefSeq" id="WP_003408108.1">
    <property type="nucleotide sequence ID" value="NZ_CP014566.1"/>
</dbReference>
<dbReference type="SMR" id="C1ANR6"/>
<dbReference type="GeneID" id="45425613"/>
<dbReference type="KEGG" id="mbt:JTY_1657"/>
<dbReference type="HOGENOM" id="CLU_123265_0_0_11"/>
<dbReference type="GO" id="GO:1990904">
    <property type="term" value="C:ribonucleoprotein complex"/>
    <property type="evidence" value="ECO:0007669"/>
    <property type="project" value="UniProtKB-KW"/>
</dbReference>
<dbReference type="GO" id="GO:0005840">
    <property type="term" value="C:ribosome"/>
    <property type="evidence" value="ECO:0007669"/>
    <property type="project" value="UniProtKB-KW"/>
</dbReference>
<dbReference type="GO" id="GO:0019843">
    <property type="term" value="F:rRNA binding"/>
    <property type="evidence" value="ECO:0007669"/>
    <property type="project" value="UniProtKB-UniRule"/>
</dbReference>
<dbReference type="GO" id="GO:0003735">
    <property type="term" value="F:structural constituent of ribosome"/>
    <property type="evidence" value="ECO:0007669"/>
    <property type="project" value="InterPro"/>
</dbReference>
<dbReference type="GO" id="GO:0000027">
    <property type="term" value="P:ribosomal large subunit assembly"/>
    <property type="evidence" value="ECO:0007669"/>
    <property type="project" value="UniProtKB-UniRule"/>
</dbReference>
<dbReference type="GO" id="GO:0006412">
    <property type="term" value="P:translation"/>
    <property type="evidence" value="ECO:0007669"/>
    <property type="project" value="InterPro"/>
</dbReference>
<dbReference type="CDD" id="cd07026">
    <property type="entry name" value="Ribosomal_L20"/>
    <property type="match status" value="1"/>
</dbReference>
<dbReference type="FunFam" id="1.10.1900.20:FF:000001">
    <property type="entry name" value="50S ribosomal protein L20"/>
    <property type="match status" value="1"/>
</dbReference>
<dbReference type="Gene3D" id="6.10.160.10">
    <property type="match status" value="1"/>
</dbReference>
<dbReference type="Gene3D" id="1.10.1900.20">
    <property type="entry name" value="Ribosomal protein L20"/>
    <property type="match status" value="1"/>
</dbReference>
<dbReference type="HAMAP" id="MF_00382">
    <property type="entry name" value="Ribosomal_bL20"/>
    <property type="match status" value="1"/>
</dbReference>
<dbReference type="InterPro" id="IPR005813">
    <property type="entry name" value="Ribosomal_bL20"/>
</dbReference>
<dbReference type="InterPro" id="IPR049946">
    <property type="entry name" value="RIBOSOMAL_L20_CS"/>
</dbReference>
<dbReference type="InterPro" id="IPR035566">
    <property type="entry name" value="Ribosomal_protein_bL20_C"/>
</dbReference>
<dbReference type="NCBIfam" id="TIGR01032">
    <property type="entry name" value="rplT_bact"/>
    <property type="match status" value="1"/>
</dbReference>
<dbReference type="PANTHER" id="PTHR10986">
    <property type="entry name" value="39S RIBOSOMAL PROTEIN L20"/>
    <property type="match status" value="1"/>
</dbReference>
<dbReference type="Pfam" id="PF00453">
    <property type="entry name" value="Ribosomal_L20"/>
    <property type="match status" value="1"/>
</dbReference>
<dbReference type="PRINTS" id="PR00062">
    <property type="entry name" value="RIBOSOMALL20"/>
</dbReference>
<dbReference type="SUPFAM" id="SSF74731">
    <property type="entry name" value="Ribosomal protein L20"/>
    <property type="match status" value="1"/>
</dbReference>
<dbReference type="PROSITE" id="PS00937">
    <property type="entry name" value="RIBOSOMAL_L20"/>
    <property type="match status" value="1"/>
</dbReference>
<evidence type="ECO:0000255" key="1">
    <source>
        <dbReference type="HAMAP-Rule" id="MF_00382"/>
    </source>
</evidence>
<evidence type="ECO:0000305" key="2"/>
<gene>
    <name evidence="1" type="primary">rplT</name>
    <name type="ordered locus">JTY_1657</name>
</gene>
<feature type="chain" id="PRO_1000193969" description="Large ribosomal subunit protein bL20">
    <location>
        <begin position="1"/>
        <end position="129"/>
    </location>
</feature>
<organism>
    <name type="scientific">Mycobacterium bovis (strain BCG / Tokyo 172 / ATCC 35737 / TMC 1019)</name>
    <dbReference type="NCBI Taxonomy" id="561275"/>
    <lineage>
        <taxon>Bacteria</taxon>
        <taxon>Bacillati</taxon>
        <taxon>Actinomycetota</taxon>
        <taxon>Actinomycetes</taxon>
        <taxon>Mycobacteriales</taxon>
        <taxon>Mycobacteriaceae</taxon>
        <taxon>Mycobacterium</taxon>
        <taxon>Mycobacterium tuberculosis complex</taxon>
    </lineage>
</organism>
<protein>
    <recommendedName>
        <fullName evidence="1">Large ribosomal subunit protein bL20</fullName>
    </recommendedName>
    <alternativeName>
        <fullName evidence="2">50S ribosomal protein L20</fullName>
    </alternativeName>
</protein>